<comment type="function">
    <molecule>Capsid polyprotein VP90</molecule>
    <text evidence="3">The capsid polyprotein VP90 self-assembles and undergoes a proteolytic cleavage by host caspases to yield the immature VP70 virion.</text>
</comment>
<comment type="function">
    <molecule>Capsid polyprotein VP70</molecule>
    <text evidence="3">The immature virion is composed of 180 VP70 subunits with 90 dimeric spikes and displays a T=3 icosahedral symmetry (By similarity). During maturation, VP70 undergoes a loss of 60 peripentonal spikes, which likely plays an important role in viral infectivity (By similarity).</text>
</comment>
<comment type="function">
    <molecule>Core protein VP34</molecule>
    <text evidence="1">Self-assembles to form an icosahedral capsid with a T=3 symmetry, about 43 nm in diameter (By similarity). This forms contains only 30 spikes located on the icosahedral 2-fold axes (By similarity).</text>
</comment>
<comment type="function">
    <molecule>Spike protein VP27</molecule>
    <text evidence="1 3">VP25 and VP27 Forms the spikes at the surface of the virion (By similarity). This forms contains only 30 spikes located on the icosahedral 2-fold axes (By similarity). Plays a role in the attachment to target host cell (By similarity). This attachment induces virion internalization through clathrin-dependent endocytosis (By similarity).</text>
</comment>
<comment type="function">
    <molecule>Spike protein VP25</molecule>
    <text evidence="1 2 3">VP25 and VP27 Forms the spikes at the surface of the virion (By similarity). This forms contains only 30 spikes located on the icosahedral 2-fold axes (By similarity). Plays a role in the attachment to target host cell (By similarity). This attachment induces virion internalization through clathrin-dependent endocytosis (By similarity).</text>
</comment>
<comment type="subunit">
    <molecule>Spike protein VP25</molecule>
    <text evidence="3">Heterodimer with spike protein VP27 (By similarity). The spikes form a globular dimer with 30 spikes covering the mature virion (By similarity). Spike protein VP25 that lacks the core attachment region may need to dimerize with spike protein VP27 to remain stably bound to the viral particle (By similarity).</text>
</comment>
<comment type="subunit">
    <molecule>Spike protein VP27</molecule>
    <text evidence="3">Heterodimer with spike protein VP25 (By similarity). The spikes form a globular dimer with 30 spikes covering the mature virion (By similarity). Spike protein VP25 that lacks the core attachment region may need to dimerize with spike protein VP27 to remain stably bound to the viral particle (By similarity).</text>
</comment>
<comment type="subcellular location">
    <molecule>Capsid polyprotein VP90</molecule>
    <subcellularLocation>
        <location evidence="3">Virion</location>
    </subcellularLocation>
    <text evidence="3">Immature capsid.</text>
</comment>
<comment type="subcellular location">
    <molecule>Capsid polyprotein VP70</molecule>
    <subcellularLocation>
        <location evidence="3">Virion</location>
    </subcellularLocation>
    <text evidence="3">Immature capsid after cleavage by host caspases.</text>
</comment>
<comment type="subcellular location">
    <molecule>Core protein VP34</molecule>
    <subcellularLocation>
        <location evidence="1">Virion</location>
    </subcellularLocation>
    <text evidence="1">Capsid.</text>
</comment>
<comment type="subcellular location">
    <molecule>Spike protein VP27</molecule>
    <subcellularLocation>
        <location evidence="1">Virion</location>
    </subcellularLocation>
    <text evidence="1">Capsid.</text>
</comment>
<comment type="subcellular location">
    <molecule>Spike protein VP25</molecule>
    <subcellularLocation>
        <location evidence="1">Host extracellular space</location>
    </subcellularLocation>
    <subcellularLocation>
        <location>Virion</location>
    </subcellularLocation>
    <text evidence="1 6">Capsid (By similarity). Spike protein VP25 that lacks the core attachment region may need to dimerize with spike protein VP27 to remain stably bound to the viral particle (Probable).</text>
</comment>
<comment type="domain">
    <molecule>Spike protein VP27</molecule>
    <text evidence="3">Contains the core attachment region and the P2 globular region.</text>
</comment>
<comment type="domain">
    <molecule>Spike protein VP25</molecule>
    <text evidence="3">Contains the P2 globular region (By similarity). The core attachment region is lost by cleavage (By similarity).</text>
</comment>
<comment type="PTM">
    <molecule>Capsid polyprotein VP90</molecule>
    <text evidence="3">Specific enzymatic cleavages by the host yield mature proteins. VP90 acidic C-terminal domain is eliminated from the immature virion by host caspases during viral maturation giving rise to virions composed of VP70 (By similarity). The virus can then dissociate from cellular membranes and exit the cell (By similarity). Further cleavages by host extracellular proteases occur resulting in the three structural proteins VP34, VP27 and VP25 and conferring infectivity (By similarity).</text>
</comment>
<comment type="similarity">
    <text evidence="6">Belongs to the astroviridae capsid polyprotein family.</text>
</comment>
<feature type="chain" id="PRO_0000320236" description="Capsid polyprotein VP90">
    <location>
        <begin position="1"/>
        <end position="778"/>
    </location>
</feature>
<feature type="chain" id="PRO_0000419574" description="Capsid polyprotein VP70" evidence="4">
    <location>
        <begin position="1"/>
        <end position="655"/>
    </location>
</feature>
<feature type="chain" id="PRO_0000419575" description="Core protein VP34" evidence="4">
    <location>
        <begin position="1"/>
        <end position="313"/>
    </location>
</feature>
<feature type="chain" id="PRO_0000419576" description="Spike protein VP27" evidence="4">
    <location>
        <begin position="394"/>
        <end position="646"/>
    </location>
</feature>
<feature type="chain" id="PRO_0000419577" description="Spike protein VP25" evidence="4">
    <location>
        <begin position="424"/>
        <end position="646"/>
    </location>
</feature>
<feature type="region of interest" description="Basic" evidence="3">
    <location>
        <begin position="1"/>
        <end position="70"/>
    </location>
</feature>
<feature type="region of interest" description="Disordered" evidence="5">
    <location>
        <begin position="1"/>
        <end position="59"/>
    </location>
</feature>
<feature type="region of interest" description="Inner core" evidence="3">
    <location>
        <begin position="71"/>
        <end position="263"/>
    </location>
</feature>
<feature type="region of interest" description="Core attachment" evidence="3">
    <location>
        <begin position="394"/>
        <end position="423"/>
    </location>
</feature>
<feature type="region of interest" description="P2 globular domain" evidence="3">
    <location>
        <begin position="424"/>
        <end position="646"/>
    </location>
</feature>
<feature type="region of interest" description="Acidic" evidence="3">
    <location>
        <begin position="647"/>
        <end position="778"/>
    </location>
</feature>
<feature type="region of interest" description="Disordered" evidence="5">
    <location>
        <begin position="670"/>
        <end position="689"/>
    </location>
</feature>
<feature type="compositionally biased region" description="Basic residues" evidence="5">
    <location>
        <begin position="19"/>
        <end position="35"/>
    </location>
</feature>
<feature type="compositionally biased region" description="Basic residues" evidence="5">
    <location>
        <begin position="45"/>
        <end position="57"/>
    </location>
</feature>
<feature type="compositionally biased region" description="Acidic residues" evidence="5">
    <location>
        <begin position="672"/>
        <end position="689"/>
    </location>
</feature>
<feature type="site" description="Cleavage" evidence="3">
    <location>
        <begin position="313"/>
        <end position="314"/>
    </location>
</feature>
<feature type="site" description="Cleavage" evidence="3">
    <location>
        <begin position="393"/>
        <end position="394"/>
    </location>
</feature>
<feature type="site" description="Cleavage" evidence="3">
    <location>
        <begin position="423"/>
        <end position="424"/>
    </location>
</feature>
<feature type="site" description="Cleavage" evidence="3">
    <location>
        <begin position="646"/>
        <end position="647"/>
    </location>
</feature>
<feature type="site" description="Cleavage" evidence="4">
    <location>
        <begin position="655"/>
        <end position="656"/>
    </location>
</feature>
<evidence type="ECO:0000250" key="1">
    <source>
        <dbReference type="UniProtKB" id="O12792"/>
    </source>
</evidence>
<evidence type="ECO:0000250" key="2">
    <source>
        <dbReference type="UniProtKB" id="Q82446"/>
    </source>
</evidence>
<evidence type="ECO:0000250" key="3">
    <source>
        <dbReference type="UniProtKB" id="Q9IFX1"/>
    </source>
</evidence>
<evidence type="ECO:0000255" key="4"/>
<evidence type="ECO:0000256" key="5">
    <source>
        <dbReference type="SAM" id="MobiDB-lite"/>
    </source>
</evidence>
<evidence type="ECO:0000305" key="6"/>
<organism>
    <name type="scientific">Human astrovirus-6</name>
    <name type="common">HAstV-6</name>
    <dbReference type="NCBI Taxonomy" id="37130"/>
    <lineage>
        <taxon>Viruses</taxon>
        <taxon>Riboviria</taxon>
        <taxon>Orthornavirae</taxon>
        <taxon>Pisuviricota</taxon>
        <taxon>Stelpaviricetes</taxon>
        <taxon>Stellavirales</taxon>
        <taxon>Astroviridae</taxon>
        <taxon>Mamastrovirus</taxon>
        <taxon>Mamastrovirus 1</taxon>
    </lineage>
</organism>
<name>CAPSD_HASV6</name>
<protein>
    <recommendedName>
        <fullName>Capsid polyprotein VP90</fullName>
    </recommendedName>
    <component>
        <recommendedName>
            <fullName>Capsid polyprotein VP70</fullName>
        </recommendedName>
    </component>
    <component>
        <recommendedName>
            <fullName>Core protein VP34</fullName>
        </recommendedName>
    </component>
    <component>
        <recommendedName>
            <fullName>Spike protein VP27</fullName>
        </recommendedName>
    </component>
    <component>
        <recommendedName>
            <fullName>Spike protein VP25</fullName>
        </recommendedName>
    </component>
</protein>
<organismHost>
    <name type="scientific">Homo sapiens</name>
    <name type="common">Human</name>
    <dbReference type="NCBI Taxonomy" id="9606"/>
</organismHost>
<dbReference type="EMBL" id="Z46658">
    <property type="protein sequence ID" value="CAA86616.1"/>
    <property type="molecule type" value="Genomic_RNA"/>
</dbReference>
<dbReference type="SMR" id="Q67815"/>
<dbReference type="GO" id="GO:0043655">
    <property type="term" value="C:host extracellular space"/>
    <property type="evidence" value="ECO:0007669"/>
    <property type="project" value="UniProtKB-SubCell"/>
</dbReference>
<dbReference type="GO" id="GO:0039617">
    <property type="term" value="C:T=3 icosahedral viral capsid"/>
    <property type="evidence" value="ECO:0000250"/>
    <property type="project" value="UniProtKB"/>
</dbReference>
<dbReference type="GO" id="GO:0075512">
    <property type="term" value="P:clathrin-dependent endocytosis of virus by host cell"/>
    <property type="evidence" value="ECO:0000250"/>
    <property type="project" value="UniProtKB"/>
</dbReference>
<dbReference type="FunFam" id="2.60.120.20:FF:000007">
    <property type="entry name" value="Capsid polyprotein VP90"/>
    <property type="match status" value="1"/>
</dbReference>
<dbReference type="Gene3D" id="2.60.120.20">
    <property type="match status" value="1"/>
</dbReference>
<dbReference type="InterPro" id="IPR004337">
    <property type="entry name" value="Astro_capsid_N"/>
</dbReference>
<dbReference type="InterPro" id="IPR022027">
    <property type="entry name" value="Astro_capsid_p"/>
</dbReference>
<dbReference type="InterPro" id="IPR029053">
    <property type="entry name" value="Viral_coat"/>
</dbReference>
<dbReference type="Pfam" id="PF03115">
    <property type="entry name" value="Astro_capsid_N"/>
    <property type="match status" value="1"/>
</dbReference>
<dbReference type="Pfam" id="PF12226">
    <property type="entry name" value="Astro_capsid_p"/>
    <property type="match status" value="1"/>
</dbReference>
<dbReference type="PROSITE" id="PS00018">
    <property type="entry name" value="EF_HAND_1"/>
    <property type="match status" value="1"/>
</dbReference>
<gene>
    <name type="ORF">ORF2</name>
</gene>
<reference key="1">
    <citation type="journal article" date="1994" name="Epidemiol. Infect.">
        <title>Prevalence of human astrovirus serotypes in the Oxford region 1976-92, with evidence for two new serotypes.</title>
        <authorList>
            <person name="Lee T.W."/>
            <person name="Kurtz J.B."/>
        </authorList>
    </citation>
    <scope>NUCLEOTIDE SEQUENCE [GENOMIC RNA]</scope>
</reference>
<proteinExistence type="inferred from homology"/>
<sequence length="778" mass="85264">MASKSDKQVTVEVNNTGRGRSKSRARSQSRGRGRSVKITVNSQNKGRRQNGRNKRQSNQRVRNIVNKQLRKQGVTGPKPAICQKATATLGTIGSNTSGTTEIEACILLNPVLVEDATGSTQFGPVQALGAQYSMWKLKYLNVRLTSMVGASAVNGTVVRVSLNPTSTPSSTSWSGLGARKHLDVTVGKNAIFKLKPSDLGGPRDGWWLTNTNDNASDTLGPSVEIHTLGRTMSSYQNQQFTGGLFLVELASEWCFTGYAANPNLVNLVKSTDKQVNVTFEGSAGTPLVMNVPAASHFARTVAQRSTLPTSMARAGENTASDTVWQVLNTAVSAAELVTPPPFNWLVKGGWWFVKLIAGRVRNGNRSFYVYASYQDALSNKPALCTGSTSGSMRTRPAVMTTLQFTQMNQPSLGHGETPATLGRSIPTSGETLKVLLTVGNPISPNETNKQTWVNKTIEPPGAVVRIGRDTQHYCTLNGFTLITKVDWFTEEFQPSEEPAPVQGLMVLGDNHKKADVYAAQQYKNPITNDKQEVTSVFLVRVNEGFQVTNHLSYFYRNSVNTDAVENIKIRSATRHTTVRFYQGSWYLLTSTVLHTGPPVSGWLWMNQELQNDQAYIIDQGIMHLITPPPVSSQIYFEMATLVPQTRSGGGETGLELVMGLSDDEYPISHVNDEEETEYETESDEDETDEVDRFDLCCTSDSEDDIENNRVTLLSTLINQGVTVDRATMITNRAFPTPNYKPRREPSNDLLAPSDCLATARSHACNETCQLSGSRGHAE</sequence>
<accession>Q67815</accession>
<keyword id="KW-0167">Capsid protein</keyword>
<keyword id="KW-1165">Clathrin-mediated endocytosis of virus by host</keyword>
<keyword id="KW-1142">T=3 icosahedral capsid protein</keyword>
<keyword id="KW-1162">Viral penetration into host cytoplasm</keyword>
<keyword id="KW-0946">Virion</keyword>
<keyword id="KW-1164">Virus endocytosis by host</keyword>
<keyword id="KW-1160">Virus entry into host cell</keyword>